<reference key="1">
    <citation type="journal article" date="1992" name="J. Bacteriol.">
        <title>Comparison of lipopolysaccharide biosynthesis genes rfaK, rfaL, rfaY, and rfaZ of Escherichia coli K-12 and Salmonella typhimurium.</title>
        <authorList>
            <person name="Klena J.D."/>
            <person name="Pradel E."/>
            <person name="Schnaitman C.A."/>
        </authorList>
    </citation>
    <scope>NUCLEOTIDE SEQUENCE [GENOMIC DNA]</scope>
    <source>
        <strain>K12</strain>
    </source>
</reference>
<reference key="2">
    <citation type="journal article" date="1994" name="Nucleic Acids Res.">
        <title>Analysis of the Escherichia coli genome. V. DNA sequence of the region from 76.0 to 81.5 minutes.</title>
        <authorList>
            <person name="Sofia H.J."/>
            <person name="Burland V."/>
            <person name="Daniels D.L."/>
            <person name="Plunkett G. III"/>
            <person name="Blattner F.R."/>
        </authorList>
    </citation>
    <scope>NUCLEOTIDE SEQUENCE [LARGE SCALE GENOMIC DNA]</scope>
    <source>
        <strain>K12 / MG1655 / ATCC 47076</strain>
    </source>
</reference>
<reference key="3">
    <citation type="journal article" date="1997" name="Science">
        <title>The complete genome sequence of Escherichia coli K-12.</title>
        <authorList>
            <person name="Blattner F.R."/>
            <person name="Plunkett G. III"/>
            <person name="Bloch C.A."/>
            <person name="Perna N.T."/>
            <person name="Burland V."/>
            <person name="Riley M."/>
            <person name="Collado-Vides J."/>
            <person name="Glasner J.D."/>
            <person name="Rode C.K."/>
            <person name="Mayhew G.F."/>
            <person name="Gregor J."/>
            <person name="Davis N.W."/>
            <person name="Kirkpatrick H.A."/>
            <person name="Goeden M.A."/>
            <person name="Rose D.J."/>
            <person name="Mau B."/>
            <person name="Shao Y."/>
        </authorList>
    </citation>
    <scope>NUCLEOTIDE SEQUENCE [LARGE SCALE GENOMIC DNA]</scope>
    <source>
        <strain>K12 / MG1655 / ATCC 47076</strain>
    </source>
</reference>
<reference key="4">
    <citation type="journal article" date="2006" name="Mol. Syst. Biol.">
        <title>Highly accurate genome sequences of Escherichia coli K-12 strains MG1655 and W3110.</title>
        <authorList>
            <person name="Hayashi K."/>
            <person name="Morooka N."/>
            <person name="Yamamoto Y."/>
            <person name="Fujita K."/>
            <person name="Isono K."/>
            <person name="Choi S."/>
            <person name="Ohtsubo E."/>
            <person name="Baba T."/>
            <person name="Wanner B.L."/>
            <person name="Mori H."/>
            <person name="Horiuchi T."/>
        </authorList>
    </citation>
    <scope>NUCLEOTIDE SEQUENCE [LARGE SCALE GENOMIC DNA]</scope>
    <source>
        <strain>K12 / W3110 / ATCC 27325 / DSM 5911</strain>
    </source>
</reference>
<reference key="5">
    <citation type="journal article" date="1992" name="J. Bacteriol.">
        <title>Role of Escherichia coli K-12 rfa genes and the rfp gene of Shigella dysenteriae 1 in generation of lipopolysaccharide core heterogeneity and attachment of O antigen.</title>
        <authorList>
            <person name="Klena J.D."/>
            <person name="Ashford R.S. II"/>
            <person name="Schnaitman C.A."/>
        </authorList>
    </citation>
    <scope>FUNCTION</scope>
    <scope>PATHWAY</scope>
    <scope>DISRUPTION PHENOTYPE</scope>
    <source>
        <strain>K12</strain>
    </source>
</reference>
<reference key="6">
    <citation type="journal article" date="1998" name="Mol. Microbiol.">
        <title>Molecular basis for structural diversity in the core regions of the lipopolysaccharides of Escherichia coli and Salmonella enterica.</title>
        <authorList>
            <person name="Heinrichs D.E."/>
            <person name="Yethon J.A."/>
            <person name="Whitfield C."/>
        </authorList>
    </citation>
    <scope>PRELIMINARY FUNCTION</scope>
    <scope>NOMENCLATURE</scope>
    <scope>REVIEW</scope>
</reference>
<protein>
    <recommendedName>
        <fullName evidence="4">Putative lipopolysaccharide heptosyltransferase 4</fullName>
        <ecNumber evidence="5">2.4.1.-</ecNumber>
    </recommendedName>
    <alternativeName>
        <fullName evidence="4">ADP-heptose:LPS heptosyltransferase 4</fullName>
    </alternativeName>
    <alternativeName>
        <fullName evidence="3">HepIV transferase</fullName>
    </alternativeName>
</protein>
<keyword id="KW-0328">Glycosyltransferase</keyword>
<keyword id="KW-0448">Lipopolysaccharide biosynthesis</keyword>
<keyword id="KW-1185">Reference proteome</keyword>
<keyword id="KW-0808">Transferase</keyword>
<name>WAAU_ECOLI</name>
<evidence type="ECO:0000269" key="1">
    <source>
    </source>
</evidence>
<evidence type="ECO:0000303" key="2">
    <source>
    </source>
</evidence>
<evidence type="ECO:0000303" key="3">
    <source>
    </source>
</evidence>
<evidence type="ECO:0000305" key="4"/>
<evidence type="ECO:0000305" key="5">
    <source>
    </source>
</evidence>
<gene>
    <name evidence="3" type="primary">waaU</name>
    <name evidence="2" type="synonym">rfaK</name>
    <name type="synonym">waaK</name>
    <name type="ordered locus">b3623</name>
    <name type="ordered locus">JW3598</name>
</gene>
<proteinExistence type="predicted"/>
<organism>
    <name type="scientific">Escherichia coli (strain K12)</name>
    <dbReference type="NCBI Taxonomy" id="83333"/>
    <lineage>
        <taxon>Bacteria</taxon>
        <taxon>Pseudomonadati</taxon>
        <taxon>Pseudomonadota</taxon>
        <taxon>Gammaproteobacteria</taxon>
        <taxon>Enterobacterales</taxon>
        <taxon>Enterobacteriaceae</taxon>
        <taxon>Escherichia</taxon>
    </lineage>
</organism>
<accession>P27242</accession>
<accession>Q2M7T7</accession>
<feature type="chain" id="PRO_0000097283" description="Putative lipopolysaccharide heptosyltransferase 4">
    <location>
        <begin position="1"/>
        <end position="357"/>
    </location>
</feature>
<feature type="sequence conflict" description="In Ref. 1; AAA24523." evidence="4" ref="1">
    <original>I</original>
    <variation>M</variation>
    <location>
        <position position="293"/>
    </location>
</feature>
<dbReference type="EC" id="2.4.1.-" evidence="5"/>
<dbReference type="EMBL" id="M95398">
    <property type="protein sequence ID" value="AAA24523.1"/>
    <property type="molecule type" value="Genomic_DNA"/>
</dbReference>
<dbReference type="EMBL" id="U00039">
    <property type="protein sequence ID" value="AAB18600.1"/>
    <property type="molecule type" value="Genomic_DNA"/>
</dbReference>
<dbReference type="EMBL" id="U00096">
    <property type="protein sequence ID" value="AAC76647.1"/>
    <property type="molecule type" value="Genomic_DNA"/>
</dbReference>
<dbReference type="EMBL" id="AP009048">
    <property type="protein sequence ID" value="BAE77669.1"/>
    <property type="molecule type" value="Genomic_DNA"/>
</dbReference>
<dbReference type="PIR" id="A65163">
    <property type="entry name" value="A65163"/>
</dbReference>
<dbReference type="RefSeq" id="NP_418080.1">
    <property type="nucleotide sequence ID" value="NC_000913.3"/>
</dbReference>
<dbReference type="RefSeq" id="WP_001236433.1">
    <property type="nucleotide sequence ID" value="NZ_LN832404.1"/>
</dbReference>
<dbReference type="SMR" id="P27242"/>
<dbReference type="BioGRID" id="4263305">
    <property type="interactions" value="254"/>
</dbReference>
<dbReference type="DIP" id="DIP-10672N"/>
<dbReference type="FunCoup" id="P27242">
    <property type="interactions" value="131"/>
</dbReference>
<dbReference type="IntAct" id="P27242">
    <property type="interactions" value="7"/>
</dbReference>
<dbReference type="STRING" id="511145.b3623"/>
<dbReference type="CAZy" id="GT9">
    <property type="family name" value="Glycosyltransferase Family 9"/>
</dbReference>
<dbReference type="jPOST" id="P27242"/>
<dbReference type="PaxDb" id="511145-b3623"/>
<dbReference type="EnsemblBacteria" id="AAC76647">
    <property type="protein sequence ID" value="AAC76647"/>
    <property type="gene ID" value="b3623"/>
</dbReference>
<dbReference type="GeneID" id="948147"/>
<dbReference type="KEGG" id="ecj:JW3598"/>
<dbReference type="KEGG" id="eco:b3623"/>
<dbReference type="KEGG" id="ecoc:C3026_19640"/>
<dbReference type="PATRIC" id="fig|511145.12.peg.3743"/>
<dbReference type="EchoBASE" id="EB1393"/>
<dbReference type="eggNOG" id="COG0859">
    <property type="taxonomic scope" value="Bacteria"/>
</dbReference>
<dbReference type="HOGENOM" id="CLU_056162_2_0_6"/>
<dbReference type="InParanoid" id="P27242"/>
<dbReference type="OMA" id="DPTIMIR"/>
<dbReference type="OrthoDB" id="89608at2"/>
<dbReference type="PhylomeDB" id="P27242"/>
<dbReference type="BioCyc" id="EcoCyc:EG11423-MONOMER"/>
<dbReference type="UniPathway" id="UPA00958"/>
<dbReference type="PRO" id="PR:P27242"/>
<dbReference type="Proteomes" id="UP000000625">
    <property type="component" value="Chromosome"/>
</dbReference>
<dbReference type="GO" id="GO:0005829">
    <property type="term" value="C:cytosol"/>
    <property type="evidence" value="ECO:0000318"/>
    <property type="project" value="GO_Central"/>
</dbReference>
<dbReference type="GO" id="GO:0008713">
    <property type="term" value="F:ADP-heptose-lipopolysaccharide heptosyltransferase activity"/>
    <property type="evidence" value="ECO:0000318"/>
    <property type="project" value="GO_Central"/>
</dbReference>
<dbReference type="GO" id="GO:0071968">
    <property type="term" value="F:lipid A-core heptosyltransferase activity"/>
    <property type="evidence" value="ECO:0007669"/>
    <property type="project" value="RHEA"/>
</dbReference>
<dbReference type="GO" id="GO:0008917">
    <property type="term" value="F:lipopolysaccharide N-acetylglucosaminyltransferase activity"/>
    <property type="evidence" value="ECO:0007669"/>
    <property type="project" value="UniProtKB-EC"/>
</dbReference>
<dbReference type="GO" id="GO:0009103">
    <property type="term" value="P:lipopolysaccharide biosynthetic process"/>
    <property type="evidence" value="ECO:0000315"/>
    <property type="project" value="EcoCyc"/>
</dbReference>
<dbReference type="GO" id="GO:0009244">
    <property type="term" value="P:lipopolysaccharide core region biosynthetic process"/>
    <property type="evidence" value="ECO:0000318"/>
    <property type="project" value="GO_Central"/>
</dbReference>
<dbReference type="CDD" id="cd03789">
    <property type="entry name" value="GT9_LPS_heptosyltransferase"/>
    <property type="match status" value="1"/>
</dbReference>
<dbReference type="FunFam" id="3.40.50.2000:FF:000367">
    <property type="entry name" value="Lipopolysaccharide 1,2-N-acetylglucosaminetransferase"/>
    <property type="match status" value="1"/>
</dbReference>
<dbReference type="Gene3D" id="3.40.50.2000">
    <property type="entry name" value="Glycogen Phosphorylase B"/>
    <property type="match status" value="2"/>
</dbReference>
<dbReference type="InterPro" id="IPR002201">
    <property type="entry name" value="Glyco_trans_9"/>
</dbReference>
<dbReference type="InterPro" id="IPR051199">
    <property type="entry name" value="LPS_LOS_Heptosyltrfase"/>
</dbReference>
<dbReference type="PANTHER" id="PTHR30160:SF1">
    <property type="entry name" value="LIPOPOLYSACCHARIDE 1,2-N-ACETYLGLUCOSAMINETRANSFERASE-RELATED"/>
    <property type="match status" value="1"/>
</dbReference>
<dbReference type="PANTHER" id="PTHR30160">
    <property type="entry name" value="TETRAACYLDISACCHARIDE 4'-KINASE-RELATED"/>
    <property type="match status" value="1"/>
</dbReference>
<dbReference type="Pfam" id="PF01075">
    <property type="entry name" value="Glyco_transf_9"/>
    <property type="match status" value="1"/>
</dbReference>
<dbReference type="SUPFAM" id="SSF53756">
    <property type="entry name" value="UDP-Glycosyltransferase/glycogen phosphorylase"/>
    <property type="match status" value="1"/>
</dbReference>
<comment type="function">
    <text evidence="1 5">Transferase involved in the biosynthesis of the core oligosaccharide region of lipopolysaccharide (LPS) (PubMed:1385388). May catalyze the addition of the terminal heptose (heptose IV) to the outer-core glucose III, the last step of the lipid A-core oligosaccharide biosynthesis (Probable).</text>
</comment>
<comment type="catalytic activity">
    <reaction evidence="5">
        <text>alpha-D-Glc-(1-&gt;2)-alpha-D-Glc-(1-&gt;3)-[alpha-D-Gal-(1-&gt;6)]-alpha-D-Glc-(1-&gt;3)-[L-alpha-D-Hep-(1-&gt;7)]-4-O-PO3(2-)-L-alpha-D-Hep-(1-&gt;3)-4-O-PO3(2-)-L-alpha-D-Hep-(1-&gt;5)-[alpha-Kdo-(2-&gt;4)]-alpha-Kdo-(2-&gt;6)-lipid A + ADP-L-glycero-beta-D-manno-heptose = lipid A-core + ADP + H(+)</text>
        <dbReference type="Rhea" id="RHEA:30019"/>
        <dbReference type="ChEBI" id="CHEBI:15378"/>
        <dbReference type="ChEBI" id="CHEBI:61506"/>
        <dbReference type="ChEBI" id="CHEBI:62003"/>
        <dbReference type="ChEBI" id="CHEBI:62004"/>
        <dbReference type="ChEBI" id="CHEBI:456216"/>
    </reaction>
</comment>
<comment type="pathway">
    <text evidence="1">Bacterial outer membrane biogenesis; LPS core biosynthesis.</text>
</comment>
<comment type="disruption phenotype">
    <text evidence="1">Mutants are sensitive to phage C21.</text>
</comment>
<sequence length="357" mass="41729">MRLGTFHKKKRFYINKIKINFLSFLFRNKINNQITDPAQVKSCLIIHDNNKLGDLIVLSSIYRELYSKGVKITLLTNRKGGEFLSNNKNIFEFCIKESTGFLEMLTLCKHLRDLQFDIVLDPFETMPSFKHSLILSSLKDSYILGFDHWYKRYYSFYHPHDECLKEHMSTRAIEILKHIYGEGKFSTNYDLHLPVDVEDKIKEFIGDTRIVIINPLGAKKICRLTFEQIKVIYQEVKTHFENYRIIFTGLPQDLLTIPILEIETLPFDEFIYTVALTKYSDFVISVDTALVHIAAAYHKPTLAFYPNSRTPEYPSHLIWSPNHHKSIQIVSPTYTVKDIDTETLTNSVKRLSCIDKK</sequence>